<name>T111_SCHPO</name>
<comment type="function">
    <text evidence="1">TAFs are components of the transcription factor IID (TFIID) complex that are essential for mediating regulation of RNA polymerase transcription.</text>
</comment>
<comment type="subunit">
    <text>TFIID is composed of TATA binding protein (TBP) and a number of TBP-associated factors (TAFs).</text>
</comment>
<comment type="subcellular location">
    <subcellularLocation>
        <location evidence="3">Nucleus</location>
    </subcellularLocation>
</comment>
<accession>Q09813</accession>
<sequence length="979" mass="111014">MSFDGLIVENENTKSGYNDGNDLTDLFKQNGTDMSVINSLLGDTNNPGMNESPKILDSSFENSNPQDGPNYEDFDFMGSIHKEFGNNINEMDDMEDVSDDNLPEEEQAVNYTGDKDDEDFGKLLAKEMGEEAAGQVLSGVGFSIPSGLVPPSEPSKTVSSTTEELQNEAQIRESIVKTFFPTFERGVLLNFSELFKPKPVKLAPPKKKTPKVCVPGRLTLEVDTDYAIIFNSKKSLPLKRNVVSPISTHTKKRRRTANTSQRNDGLDLNTVFTTNDWEKNIIYDESDVNKTNQSSFFIDKSLVDIDFAFDENIFDGDTGTSKVVLNLNDPKLLLQPQLPKKEDSQRSFADTHQRNSLAWKFNISNDPAYEMLKQNHQSKVRNTLSQLAIEHAAFAEKLTFPYYKTRLSKRAVRSYHRPTMSFKPNAAIVFSPLIVRKRSKDKHKSERELIPTTKEITMGDTTHAILVEFSEEHPAVLSNAGMASRIVNYYRKKNEQDESRPKLEVGESHVLDVQDRSPFWNFGSVEPGEITPTLYNKMIRAPLFKHEVPPTDFILIRNSSSYGSKYYLKNINHMFVSGQTFPVTDVPGPHSRKVTTASKNRLKMLVFRLIRRSPNGGLFIRQLSKHFSDQNEMQIRQRLKEFMEYKKKGDGPGYWKLKSNEVVPDEAGTRSMVSPETVCLLESMQVGVRQLEDAGYGKTMDEINDDEDEEQPAEQLLAPWITTRNFINATQGKAMLTLFGEGDPTGIGEGYSFIRTSMKGGFKPAGETADDKPEPQTKNAHAYNVAKQQRAYEEEINRIWNAQKRGLSINNLEELAKKYGINSIHDDYVESNEETTREETPSSDKVLRIVRLYRDKNGNLERKQETIHDPIVIHAYLKKRREIDEQSTALDAVVPTGDEAIDRRNRRRLEQELAKSQKNWERRRARHAAKEGINLNGEGRKPTTRKCSNCGQVGHMKTNKICPLFGRPEGGLATMLDKN</sequence>
<feature type="chain" id="PRO_0000072397" description="Putative transcription initiation factor TFIID 111 kDa subunit">
    <location>
        <begin position="1"/>
        <end position="979"/>
    </location>
</feature>
<feature type="modified residue" description="Phosphoserine" evidence="2">
    <location>
        <position position="244"/>
    </location>
</feature>
<proteinExistence type="evidence at protein level"/>
<protein>
    <recommendedName>
        <fullName>Putative transcription initiation factor TFIID 111 kDa subunit</fullName>
    </recommendedName>
    <alternativeName>
        <fullName>TAFII-111</fullName>
    </alternativeName>
    <alternativeName>
        <fullName>TBP-associated factor 111 kDa</fullName>
    </alternativeName>
</protein>
<reference key="1">
    <citation type="journal article" date="2002" name="Nature">
        <title>The genome sequence of Schizosaccharomyces pombe.</title>
        <authorList>
            <person name="Wood V."/>
            <person name="Gwilliam R."/>
            <person name="Rajandream M.A."/>
            <person name="Lyne M.H."/>
            <person name="Lyne R."/>
            <person name="Stewart A."/>
            <person name="Sgouros J.G."/>
            <person name="Peat N."/>
            <person name="Hayles J."/>
            <person name="Baker S.G."/>
            <person name="Basham D."/>
            <person name="Bowman S."/>
            <person name="Brooks K."/>
            <person name="Brown D."/>
            <person name="Brown S."/>
            <person name="Chillingworth T."/>
            <person name="Churcher C.M."/>
            <person name="Collins M."/>
            <person name="Connor R."/>
            <person name="Cronin A."/>
            <person name="Davis P."/>
            <person name="Feltwell T."/>
            <person name="Fraser A."/>
            <person name="Gentles S."/>
            <person name="Goble A."/>
            <person name="Hamlin N."/>
            <person name="Harris D.E."/>
            <person name="Hidalgo J."/>
            <person name="Hodgson G."/>
            <person name="Holroyd S."/>
            <person name="Hornsby T."/>
            <person name="Howarth S."/>
            <person name="Huckle E.J."/>
            <person name="Hunt S."/>
            <person name="Jagels K."/>
            <person name="James K.D."/>
            <person name="Jones L."/>
            <person name="Jones M."/>
            <person name="Leather S."/>
            <person name="McDonald S."/>
            <person name="McLean J."/>
            <person name="Mooney P."/>
            <person name="Moule S."/>
            <person name="Mungall K.L."/>
            <person name="Murphy L.D."/>
            <person name="Niblett D."/>
            <person name="Odell C."/>
            <person name="Oliver K."/>
            <person name="O'Neil S."/>
            <person name="Pearson D."/>
            <person name="Quail M.A."/>
            <person name="Rabbinowitsch E."/>
            <person name="Rutherford K.M."/>
            <person name="Rutter S."/>
            <person name="Saunders D."/>
            <person name="Seeger K."/>
            <person name="Sharp S."/>
            <person name="Skelton J."/>
            <person name="Simmonds M.N."/>
            <person name="Squares R."/>
            <person name="Squares S."/>
            <person name="Stevens K."/>
            <person name="Taylor K."/>
            <person name="Taylor R.G."/>
            <person name="Tivey A."/>
            <person name="Walsh S.V."/>
            <person name="Warren T."/>
            <person name="Whitehead S."/>
            <person name="Woodward J.R."/>
            <person name="Volckaert G."/>
            <person name="Aert R."/>
            <person name="Robben J."/>
            <person name="Grymonprez B."/>
            <person name="Weltjens I."/>
            <person name="Vanstreels E."/>
            <person name="Rieger M."/>
            <person name="Schaefer M."/>
            <person name="Mueller-Auer S."/>
            <person name="Gabel C."/>
            <person name="Fuchs M."/>
            <person name="Duesterhoeft A."/>
            <person name="Fritzc C."/>
            <person name="Holzer E."/>
            <person name="Moestl D."/>
            <person name="Hilbert H."/>
            <person name="Borzym K."/>
            <person name="Langer I."/>
            <person name="Beck A."/>
            <person name="Lehrach H."/>
            <person name="Reinhardt R."/>
            <person name="Pohl T.M."/>
            <person name="Eger P."/>
            <person name="Zimmermann W."/>
            <person name="Wedler H."/>
            <person name="Wambutt R."/>
            <person name="Purnelle B."/>
            <person name="Goffeau A."/>
            <person name="Cadieu E."/>
            <person name="Dreano S."/>
            <person name="Gloux S."/>
            <person name="Lelaure V."/>
            <person name="Mottier S."/>
            <person name="Galibert F."/>
            <person name="Aves S.J."/>
            <person name="Xiang Z."/>
            <person name="Hunt C."/>
            <person name="Moore K."/>
            <person name="Hurst S.M."/>
            <person name="Lucas M."/>
            <person name="Rochet M."/>
            <person name="Gaillardin C."/>
            <person name="Tallada V.A."/>
            <person name="Garzon A."/>
            <person name="Thode G."/>
            <person name="Daga R.R."/>
            <person name="Cruzado L."/>
            <person name="Jimenez J."/>
            <person name="Sanchez M."/>
            <person name="del Rey F."/>
            <person name="Benito J."/>
            <person name="Dominguez A."/>
            <person name="Revuelta J.L."/>
            <person name="Moreno S."/>
            <person name="Armstrong J."/>
            <person name="Forsburg S.L."/>
            <person name="Cerutti L."/>
            <person name="Lowe T."/>
            <person name="McCombie W.R."/>
            <person name="Paulsen I."/>
            <person name="Potashkin J."/>
            <person name="Shpakovski G.V."/>
            <person name="Ussery D."/>
            <person name="Barrell B.G."/>
            <person name="Nurse P."/>
        </authorList>
    </citation>
    <scope>NUCLEOTIDE SEQUENCE [LARGE SCALE GENOMIC DNA]</scope>
    <source>
        <strain>972 / ATCC 24843</strain>
    </source>
</reference>
<reference key="2">
    <citation type="journal article" date="2008" name="J. Proteome Res.">
        <title>Phosphoproteome analysis of fission yeast.</title>
        <authorList>
            <person name="Wilson-Grady J.T."/>
            <person name="Villen J."/>
            <person name="Gygi S.P."/>
        </authorList>
    </citation>
    <scope>PHOSPHORYLATION [LARGE SCALE ANALYSIS] AT SER-244</scope>
    <scope>IDENTIFICATION BY MASS SPECTROMETRY</scope>
</reference>
<gene>
    <name type="ORF">SPAC2G11.14</name>
</gene>
<dbReference type="EMBL" id="CU329670">
    <property type="protein sequence ID" value="CAA91179.1"/>
    <property type="molecule type" value="Genomic_DNA"/>
</dbReference>
<dbReference type="PIR" id="T38580">
    <property type="entry name" value="S62469"/>
</dbReference>
<dbReference type="SMR" id="Q09813"/>
<dbReference type="BioGRID" id="278339">
    <property type="interactions" value="7"/>
</dbReference>
<dbReference type="DIP" id="DIP-36781N"/>
<dbReference type="FunCoup" id="Q09813">
    <property type="interactions" value="56"/>
</dbReference>
<dbReference type="IntAct" id="Q09813">
    <property type="interactions" value="4"/>
</dbReference>
<dbReference type="STRING" id="284812.Q09813"/>
<dbReference type="iPTMnet" id="Q09813"/>
<dbReference type="PaxDb" id="4896-SPAC2G11.14.1"/>
<dbReference type="EnsemblFungi" id="SPAC2G11.14.1">
    <property type="protein sequence ID" value="SPAC2G11.14.1:pep"/>
    <property type="gene ID" value="SPAC2G11.14"/>
</dbReference>
<dbReference type="KEGG" id="spo:2541848"/>
<dbReference type="PomBase" id="SPAC2G11.14"/>
<dbReference type="VEuPathDB" id="FungiDB:SPAC2G11.14"/>
<dbReference type="eggNOG" id="KOG0008">
    <property type="taxonomic scope" value="Eukaryota"/>
</dbReference>
<dbReference type="HOGENOM" id="CLU_000572_0_0_1"/>
<dbReference type="InParanoid" id="Q09813"/>
<dbReference type="OMA" id="KEFMKYQ"/>
<dbReference type="PhylomeDB" id="Q09813"/>
<dbReference type="Reactome" id="R-SPO-674695">
    <property type="pathway name" value="RNA Polymerase II Pre-transcription Events"/>
</dbReference>
<dbReference type="Reactome" id="R-SPO-73776">
    <property type="pathway name" value="RNA Polymerase II Promoter Escape"/>
</dbReference>
<dbReference type="Reactome" id="R-SPO-73779">
    <property type="pathway name" value="RNA Polymerase II Transcription Pre-Initiation And Promoter Opening"/>
</dbReference>
<dbReference type="Reactome" id="R-SPO-75953">
    <property type="pathway name" value="RNA Polymerase II Transcription Initiation"/>
</dbReference>
<dbReference type="Reactome" id="R-SPO-76042">
    <property type="pathway name" value="RNA Polymerase II Transcription Initiation And Promoter Clearance"/>
</dbReference>
<dbReference type="PRO" id="PR:Q09813"/>
<dbReference type="Proteomes" id="UP000002485">
    <property type="component" value="Chromosome I"/>
</dbReference>
<dbReference type="GO" id="GO:0005669">
    <property type="term" value="C:transcription factor TFIID complex"/>
    <property type="evidence" value="ECO:0000314"/>
    <property type="project" value="PomBase"/>
</dbReference>
<dbReference type="GO" id="GO:0004402">
    <property type="term" value="F:histone acetyltransferase activity"/>
    <property type="evidence" value="ECO:0007669"/>
    <property type="project" value="InterPro"/>
</dbReference>
<dbReference type="GO" id="GO:0016251">
    <property type="term" value="F:RNA polymerase II general transcription initiation factor activity"/>
    <property type="evidence" value="ECO:0000269"/>
    <property type="project" value="PomBase"/>
</dbReference>
<dbReference type="GO" id="GO:0017025">
    <property type="term" value="F:TBP-class protein binding"/>
    <property type="evidence" value="ECO:0000318"/>
    <property type="project" value="GO_Central"/>
</dbReference>
<dbReference type="GO" id="GO:0051123">
    <property type="term" value="P:RNA polymerase II preinitiation complex assembly"/>
    <property type="evidence" value="ECO:0000318"/>
    <property type="project" value="GO_Central"/>
</dbReference>
<dbReference type="GO" id="GO:0006367">
    <property type="term" value="P:transcription initiation at RNA polymerase II promoter"/>
    <property type="evidence" value="ECO:0000269"/>
    <property type="project" value="PomBase"/>
</dbReference>
<dbReference type="InterPro" id="IPR040240">
    <property type="entry name" value="TAF1"/>
</dbReference>
<dbReference type="InterPro" id="IPR022591">
    <property type="entry name" value="TAF1_HAT_dom"/>
</dbReference>
<dbReference type="InterPro" id="IPR041670">
    <property type="entry name" value="Znf-CCHC_6"/>
</dbReference>
<dbReference type="PANTHER" id="PTHR13900">
    <property type="entry name" value="TRANSCRIPTION INITIATION FACTOR TFIID"/>
    <property type="match status" value="1"/>
</dbReference>
<dbReference type="PANTHER" id="PTHR13900:SF0">
    <property type="entry name" value="TRANSCRIPTION INITIATION FACTOR TFIID SUBUNIT 1"/>
    <property type="match status" value="1"/>
</dbReference>
<dbReference type="Pfam" id="PF12157">
    <property type="entry name" value="DUF3591"/>
    <property type="match status" value="1"/>
</dbReference>
<dbReference type="Pfam" id="PF15288">
    <property type="entry name" value="zf-CCHC_6"/>
    <property type="match status" value="1"/>
</dbReference>
<keyword id="KW-0539">Nucleus</keyword>
<keyword id="KW-0597">Phosphoprotein</keyword>
<keyword id="KW-1185">Reference proteome</keyword>
<keyword id="KW-0804">Transcription</keyword>
<keyword id="KW-0805">Transcription regulation</keyword>
<organism>
    <name type="scientific">Schizosaccharomyces pombe (strain 972 / ATCC 24843)</name>
    <name type="common">Fission yeast</name>
    <dbReference type="NCBI Taxonomy" id="284812"/>
    <lineage>
        <taxon>Eukaryota</taxon>
        <taxon>Fungi</taxon>
        <taxon>Dikarya</taxon>
        <taxon>Ascomycota</taxon>
        <taxon>Taphrinomycotina</taxon>
        <taxon>Schizosaccharomycetes</taxon>
        <taxon>Schizosaccharomycetales</taxon>
        <taxon>Schizosaccharomycetaceae</taxon>
        <taxon>Schizosaccharomyces</taxon>
    </lineage>
</organism>
<evidence type="ECO:0000250" key="1"/>
<evidence type="ECO:0000269" key="2">
    <source>
    </source>
</evidence>
<evidence type="ECO:0000305" key="3"/>